<accession>Q4R1E8</accession>
<accession>P18332</accession>
<name>ADH2_ORYSI</name>
<evidence type="ECO:0000250" key="1">
    <source>
        <dbReference type="UniProtKB" id="P00327"/>
    </source>
</evidence>
<evidence type="ECO:0000250" key="2">
    <source>
        <dbReference type="UniProtKB" id="P06525"/>
    </source>
</evidence>
<evidence type="ECO:0000269" key="3">
    <source>
    </source>
</evidence>
<evidence type="ECO:0000305" key="4"/>
<comment type="catalytic activity">
    <reaction evidence="2">
        <text>a primary alcohol + NAD(+) = an aldehyde + NADH + H(+)</text>
        <dbReference type="Rhea" id="RHEA:10736"/>
        <dbReference type="ChEBI" id="CHEBI:15378"/>
        <dbReference type="ChEBI" id="CHEBI:15734"/>
        <dbReference type="ChEBI" id="CHEBI:17478"/>
        <dbReference type="ChEBI" id="CHEBI:57540"/>
        <dbReference type="ChEBI" id="CHEBI:57945"/>
        <dbReference type="EC" id="1.1.1.1"/>
    </reaction>
</comment>
<comment type="catalytic activity">
    <reaction evidence="2">
        <text>a secondary alcohol + NAD(+) = a ketone + NADH + H(+)</text>
        <dbReference type="Rhea" id="RHEA:10740"/>
        <dbReference type="ChEBI" id="CHEBI:15378"/>
        <dbReference type="ChEBI" id="CHEBI:17087"/>
        <dbReference type="ChEBI" id="CHEBI:35681"/>
        <dbReference type="ChEBI" id="CHEBI:57540"/>
        <dbReference type="ChEBI" id="CHEBI:57945"/>
        <dbReference type="EC" id="1.1.1.1"/>
    </reaction>
</comment>
<comment type="cofactor">
    <cofactor evidence="2">
        <name>Zn(2+)</name>
        <dbReference type="ChEBI" id="CHEBI:29105"/>
    </cofactor>
    <text evidence="2">Binds 2 Zn(2+) ions per subunit.</text>
</comment>
<comment type="subunit">
    <text evidence="3">Homodimer.</text>
</comment>
<comment type="subcellular location">
    <subcellularLocation>
        <location evidence="2">Cytoplasm</location>
    </subcellularLocation>
</comment>
<comment type="similarity">
    <text evidence="4">Belongs to the zinc-containing alcohol dehydrogenase family.</text>
</comment>
<reference key="1">
    <citation type="journal article" date="1989" name="Plant Mol. Biol.">
        <title>Rice alcohol dehydrogenase genes: anaerobic induction, organ specific expression and characterization of cDNA clones.</title>
        <authorList>
            <person name="Xie Y."/>
            <person name="Wu R."/>
        </authorList>
    </citation>
    <scope>NUCLEOTIDE SEQUENCE [MRNA]</scope>
    <scope>HOMODIMER</scope>
    <source>
        <strain>cv. IR26</strain>
        <tissue>Seedling</tissue>
    </source>
</reference>
<reference key="2">
    <citation type="journal article" date="1990" name="Gene">
        <title>Molecular analysis of an alcohol dehydrogenase-encoding genomic clone (adh2) from rice.</title>
        <authorList>
            <person name="Xie Y."/>
            <person name="Wu R."/>
        </authorList>
    </citation>
    <scope>NUCLEOTIDE SEQUENCE [GENOMIC DNA]</scope>
</reference>
<reference key="3">
    <citation type="journal article" date="2005" name="Theor. Appl. Genet.">
        <title>Nucleotide polymorphism in the Adh2 region of the wild rice Oryza rufipogon.</title>
        <authorList>
            <person name="Yoshida K."/>
            <person name="Miyashita N.T."/>
        </authorList>
    </citation>
    <scope>NUCLEOTIDE SEQUENCE [GENOMIC DNA]</scope>
    <source>
        <strain>cv. IR36</strain>
    </source>
</reference>
<sequence>MATAGKVIKCKAAVAWEAGKPLSIEEVEVAPPQAMEVRVKILYTALCHTDVYFWEAKGQTPVFPRILGHEAGGIVESVGEGVTELAPGDHVLPVFTGECKECDHCKSEESNMCDLLRINVDRGVMIGDGKSRFTIKGKPIFHFVGTSTFSEYTVIHVGCLAKINPEAPLDKVCILSCGFSTGFGATVNVAKPKKGQTVAIFGLGAVGLAAMEGARLSGASRIIGVDLNPAKFEQAKKFGCTDFVNPKDHSKPVHEVLIEMTNGGLDRAVECTGNINAMISCFECVHDGWGVAVLVGVPTKDDVFKTHPMNFLNEKTLKGTFFGNYKPRTDLPNVVELYMKKELELEKFITHSVPFSEINTAFDLMLKGESLRCVMRMDE</sequence>
<feature type="chain" id="PRO_0000291462" description="Alcohol dehydrogenase 2">
    <location>
        <begin position="1"/>
        <end position="379"/>
    </location>
</feature>
<feature type="binding site" evidence="2">
    <location>
        <position position="47"/>
    </location>
    <ligand>
        <name>Zn(2+)</name>
        <dbReference type="ChEBI" id="CHEBI:29105"/>
        <label>1</label>
        <note>catalytic</note>
    </ligand>
</feature>
<feature type="binding site" evidence="2">
    <location>
        <position position="49"/>
    </location>
    <ligand>
        <name>an alcohol</name>
        <dbReference type="ChEBI" id="CHEBI:30879"/>
    </ligand>
</feature>
<feature type="binding site" evidence="2">
    <location>
        <position position="49"/>
    </location>
    <ligand>
        <name>NAD(+)</name>
        <dbReference type="ChEBI" id="CHEBI:57540"/>
    </ligand>
</feature>
<feature type="binding site" evidence="2">
    <location>
        <position position="49"/>
    </location>
    <ligand>
        <name>Zn(2+)</name>
        <dbReference type="ChEBI" id="CHEBI:29105"/>
        <label>1</label>
        <note>catalytic</note>
    </ligand>
</feature>
<feature type="binding site" evidence="1">
    <location>
        <position position="69"/>
    </location>
    <ligand>
        <name>an alcohol</name>
        <dbReference type="ChEBI" id="CHEBI:30879"/>
    </ligand>
</feature>
<feature type="binding site" evidence="2">
    <location>
        <position position="69"/>
    </location>
    <ligand>
        <name>Zn(2+)</name>
        <dbReference type="ChEBI" id="CHEBI:29105"/>
        <label>1</label>
        <note>catalytic</note>
    </ligand>
</feature>
<feature type="binding site" evidence="2">
    <location>
        <position position="99"/>
    </location>
    <ligand>
        <name>Zn(2+)</name>
        <dbReference type="ChEBI" id="CHEBI:29105"/>
        <label>2</label>
    </ligand>
</feature>
<feature type="binding site" evidence="2">
    <location>
        <position position="102"/>
    </location>
    <ligand>
        <name>Zn(2+)</name>
        <dbReference type="ChEBI" id="CHEBI:29105"/>
        <label>2</label>
    </ligand>
</feature>
<feature type="binding site" evidence="2">
    <location>
        <position position="105"/>
    </location>
    <ligand>
        <name>Zn(2+)</name>
        <dbReference type="ChEBI" id="CHEBI:29105"/>
        <label>2</label>
    </ligand>
</feature>
<feature type="binding site" evidence="2">
    <location>
        <position position="113"/>
    </location>
    <ligand>
        <name>Zn(2+)</name>
        <dbReference type="ChEBI" id="CHEBI:29105"/>
        <label>2</label>
    </ligand>
</feature>
<feature type="binding site" evidence="2">
    <location>
        <position position="177"/>
    </location>
    <ligand>
        <name>Zn(2+)</name>
        <dbReference type="ChEBI" id="CHEBI:29105"/>
        <label>1</label>
        <note>catalytic</note>
    </ligand>
</feature>
<feature type="binding site" evidence="2">
    <location>
        <begin position="202"/>
        <end position="207"/>
    </location>
    <ligand>
        <name>NAD(+)</name>
        <dbReference type="ChEBI" id="CHEBI:57540"/>
    </ligand>
</feature>
<feature type="binding site" evidence="2">
    <location>
        <position position="226"/>
    </location>
    <ligand>
        <name>NAD(+)</name>
        <dbReference type="ChEBI" id="CHEBI:57540"/>
    </ligand>
</feature>
<feature type="binding site" evidence="2">
    <location>
        <position position="231"/>
    </location>
    <ligand>
        <name>NAD(+)</name>
        <dbReference type="ChEBI" id="CHEBI:57540"/>
    </ligand>
</feature>
<feature type="binding site" evidence="2">
    <location>
        <position position="272"/>
    </location>
    <ligand>
        <name>NAD(+)</name>
        <dbReference type="ChEBI" id="CHEBI:57540"/>
    </ligand>
</feature>
<feature type="binding site" evidence="1">
    <location>
        <begin position="295"/>
        <end position="297"/>
    </location>
    <ligand>
        <name>NAD(+)</name>
        <dbReference type="ChEBI" id="CHEBI:57540"/>
    </ligand>
</feature>
<feature type="binding site" evidence="2">
    <location>
        <position position="295"/>
    </location>
    <ligand>
        <name>NAD(+)</name>
        <dbReference type="ChEBI" id="CHEBI:57540"/>
    </ligand>
</feature>
<feature type="binding site" evidence="2">
    <location>
        <position position="322"/>
    </location>
    <ligand>
        <name>NAD(+)</name>
        <dbReference type="ChEBI" id="CHEBI:57540"/>
    </ligand>
</feature>
<feature type="binding site" evidence="2">
    <location>
        <position position="372"/>
    </location>
    <ligand>
        <name>NAD(+)</name>
        <dbReference type="ChEBI" id="CHEBI:57540"/>
    </ligand>
</feature>
<feature type="sequence conflict" description="In Ref. 1; CAA34364 and 2; AAA33889." evidence="4" ref="1 2">
    <location>
        <position position="4"/>
    </location>
</feature>
<feature type="sequence conflict" description="In Ref. 1; CAA34364 and 2; AAA33889." evidence="4" ref="1 2">
    <original>KP</original>
    <variation>EA</variation>
    <location>
        <begin position="20"/>
        <end position="21"/>
    </location>
</feature>
<feature type="sequence conflict" description="In Ref. 1; CAA34364 and 2; AAA33889." evidence="4" ref="1 2">
    <original>A</original>
    <variation>R</variation>
    <location>
        <position position="34"/>
    </location>
</feature>
<feature type="sequence conflict" description="In Ref. 1; CAA34364 and 2; AAA33889." evidence="4" ref="1 2">
    <original>P</original>
    <variation>A</variation>
    <location>
        <position position="87"/>
    </location>
</feature>
<feature type="sequence conflict" description="In Ref. 1; CAA34364 and 2; AAA33889." evidence="4" ref="1 2">
    <original>TG</original>
    <variation>SR</variation>
    <location>
        <begin position="181"/>
        <end position="182"/>
    </location>
</feature>
<feature type="sequence conflict" description="In Ref. 1; CAA34364 and 2; AAA33889." evidence="4" ref="1 2">
    <original>HE</original>
    <variation>Q</variation>
    <location>
        <begin position="254"/>
        <end position="255"/>
    </location>
</feature>
<feature type="sequence conflict" description="In Ref. 1; CAA34364 and 2; AAA33889." evidence="4" ref="1 2">
    <location>
        <begin position="298"/>
        <end position="299"/>
    </location>
</feature>
<feature type="sequence conflict" description="In Ref. 1; CAA34364 and 2; AAA33889." evidence="4" ref="1 2">
    <original>F</original>
    <variation>LI</variation>
    <location>
        <position position="321"/>
    </location>
</feature>
<feature type="sequence conflict" description="In Ref. 1; CAA34364 and 2; AAA33889." evidence="4" ref="1 2">
    <location>
        <position position="351"/>
    </location>
</feature>
<feature type="sequence conflict" description="In Ref. 2; AAA33889." evidence="4" ref="2">
    <original>ESLRCV</original>
    <variation>RVSAAS</variation>
    <location>
        <begin position="369"/>
        <end position="374"/>
    </location>
</feature>
<feature type="sequence conflict" description="In Ref. 1; CAA34364." evidence="4" ref="1">
    <original>RMD</original>
    <variation>SMY</variation>
    <location>
        <begin position="376"/>
        <end position="378"/>
    </location>
</feature>
<organism>
    <name type="scientific">Oryza sativa subsp. indica</name>
    <name type="common">Rice</name>
    <dbReference type="NCBI Taxonomy" id="39946"/>
    <lineage>
        <taxon>Eukaryota</taxon>
        <taxon>Viridiplantae</taxon>
        <taxon>Streptophyta</taxon>
        <taxon>Embryophyta</taxon>
        <taxon>Tracheophyta</taxon>
        <taxon>Spermatophyta</taxon>
        <taxon>Magnoliopsida</taxon>
        <taxon>Liliopsida</taxon>
        <taxon>Poales</taxon>
        <taxon>Poaceae</taxon>
        <taxon>BOP clade</taxon>
        <taxon>Oryzoideae</taxon>
        <taxon>Oryzeae</taxon>
        <taxon>Oryzinae</taxon>
        <taxon>Oryza</taxon>
        <taxon>Oryza sativa</taxon>
    </lineage>
</organism>
<gene>
    <name type="primary">ADH2</name>
</gene>
<dbReference type="EC" id="1.1.1.1" evidence="2"/>
<dbReference type="EMBL" id="X16297">
    <property type="protein sequence ID" value="CAA34364.1"/>
    <property type="molecule type" value="mRNA"/>
</dbReference>
<dbReference type="EMBL" id="M36469">
    <property type="protein sequence ID" value="AAA33889.1"/>
    <property type="molecule type" value="Genomic_DNA"/>
</dbReference>
<dbReference type="EMBL" id="AB208537">
    <property type="protein sequence ID" value="BAE00045.1"/>
    <property type="molecule type" value="Genomic_DNA"/>
</dbReference>
<dbReference type="PIR" id="JH0111">
    <property type="entry name" value="DERZA2"/>
</dbReference>
<dbReference type="SMR" id="Q4R1E8"/>
<dbReference type="GO" id="GO:0005829">
    <property type="term" value="C:cytosol"/>
    <property type="evidence" value="ECO:0007669"/>
    <property type="project" value="TreeGrafter"/>
</dbReference>
<dbReference type="GO" id="GO:0004022">
    <property type="term" value="F:alcohol dehydrogenase (NAD+) activity"/>
    <property type="evidence" value="ECO:0007669"/>
    <property type="project" value="UniProtKB-EC"/>
</dbReference>
<dbReference type="GO" id="GO:0051903">
    <property type="term" value="F:S-(hydroxymethyl)glutathione dehydrogenase [NAD(P)+] activity"/>
    <property type="evidence" value="ECO:0007669"/>
    <property type="project" value="TreeGrafter"/>
</dbReference>
<dbReference type="GO" id="GO:0008270">
    <property type="term" value="F:zinc ion binding"/>
    <property type="evidence" value="ECO:0007669"/>
    <property type="project" value="InterPro"/>
</dbReference>
<dbReference type="GO" id="GO:0046294">
    <property type="term" value="P:formaldehyde catabolic process"/>
    <property type="evidence" value="ECO:0007669"/>
    <property type="project" value="TreeGrafter"/>
</dbReference>
<dbReference type="CDD" id="cd08301">
    <property type="entry name" value="alcohol_DH_plants"/>
    <property type="match status" value="1"/>
</dbReference>
<dbReference type="FunFam" id="3.90.180.10:FF:000067">
    <property type="entry name" value="alcohol dehydrogenase 1-like isoform X1"/>
    <property type="match status" value="1"/>
</dbReference>
<dbReference type="FunFam" id="3.40.50.720:FF:001292">
    <property type="entry name" value="Alcohol dehydrogenase class-P"/>
    <property type="match status" value="1"/>
</dbReference>
<dbReference type="Gene3D" id="3.90.180.10">
    <property type="entry name" value="Medium-chain alcohol dehydrogenases, catalytic domain"/>
    <property type="match status" value="1"/>
</dbReference>
<dbReference type="Gene3D" id="3.40.50.720">
    <property type="entry name" value="NAD(P)-binding Rossmann-like Domain"/>
    <property type="match status" value="1"/>
</dbReference>
<dbReference type="InterPro" id="IPR013149">
    <property type="entry name" value="ADH-like_C"/>
</dbReference>
<dbReference type="InterPro" id="IPR013154">
    <property type="entry name" value="ADH-like_N"/>
</dbReference>
<dbReference type="InterPro" id="IPR002328">
    <property type="entry name" value="ADH_Zn_CS"/>
</dbReference>
<dbReference type="InterPro" id="IPR011032">
    <property type="entry name" value="GroES-like_sf"/>
</dbReference>
<dbReference type="InterPro" id="IPR036291">
    <property type="entry name" value="NAD(P)-bd_dom_sf"/>
</dbReference>
<dbReference type="PANTHER" id="PTHR43880">
    <property type="entry name" value="ALCOHOL DEHYDROGENASE"/>
    <property type="match status" value="1"/>
</dbReference>
<dbReference type="PANTHER" id="PTHR43880:SF59">
    <property type="entry name" value="ALCOHOL DEHYDROGENASE 2"/>
    <property type="match status" value="1"/>
</dbReference>
<dbReference type="Pfam" id="PF08240">
    <property type="entry name" value="ADH_N"/>
    <property type="match status" value="1"/>
</dbReference>
<dbReference type="Pfam" id="PF00107">
    <property type="entry name" value="ADH_zinc_N"/>
    <property type="match status" value="1"/>
</dbReference>
<dbReference type="SUPFAM" id="SSF50129">
    <property type="entry name" value="GroES-like"/>
    <property type="match status" value="2"/>
</dbReference>
<dbReference type="SUPFAM" id="SSF51735">
    <property type="entry name" value="NAD(P)-binding Rossmann-fold domains"/>
    <property type="match status" value="1"/>
</dbReference>
<dbReference type="PROSITE" id="PS00059">
    <property type="entry name" value="ADH_ZINC"/>
    <property type="match status" value="1"/>
</dbReference>
<proteinExistence type="evidence at transcript level"/>
<keyword id="KW-0963">Cytoplasm</keyword>
<keyword id="KW-0479">Metal-binding</keyword>
<keyword id="KW-0520">NAD</keyword>
<keyword id="KW-0560">Oxidoreductase</keyword>
<keyword id="KW-0862">Zinc</keyword>
<protein>
    <recommendedName>
        <fullName>Alcohol dehydrogenase 2</fullName>
        <ecNumber evidence="2">1.1.1.1</ecNumber>
    </recommendedName>
</protein>